<proteinExistence type="evidence at transcript level"/>
<sequence>MSDPNKTAITAEKEALNLKLPPIVHPPKNIGVDTPKQSELLNYRRSKEQQKKINQLVISAAKKSLDKTLDKRIPPLPEPDFPPTMTSEIKKKGLNYIFMKQCVESSPIVPIQPQWLDHMLMLIPEHLKEGKKREELLGSLINEVSMDFEKSMKRYLVQSVLVKPPVKWLEDEWGPLPESPEGLDYSNPWHSNFVQARSQILANLHIVHPTMKLLLELGYTTFSDIILLDLTGIRDRGPIDCEALRNDLSIQARKAEERIMNTWYPKVINLFTKKEALEGIKPEKVDSFYNCVSILMSNQLKDLLWRTVEEFVRLFDSRYILRLPIFKMELTFDDDKMEFYPTFQDLEDVVLGLIERISETLQTVQTVPSWLSGTTAPVNLDTELPEHVMYWALSTLRIAVHQNLEGVRAHYKTYVTNYNWLLDGTATKMIERFQSENHTFDEYTEFIERFFSLASEIMLLPQWAHYPMVRLDCEDLKTGLTNKAKAFANILLNDIASKHRKENESICSEFETIKEHALRVPETTEEMMELIAFIEKARTTGIQNLAQRIQESKRQMGYFLDTFLLSQEDLNLNASVLLWPSKINPVFDENDELIENSKRTKENELIAKREKLILEIEKESRRMEEFTEFAELDRMQQYVADVRHLQKRIQDSEEAVQFINKEEELFKWELTKYPELEKLKVTIEPYQKFFNFVLKWQRTEKRWMDGGFLDLNGESMEADIDEFSREVFKTLKFFQTKQKKELQEKRKAARKRSLMEEKPEEEPKESPTITMMRARHWKQMSEIVGYDLTPDSGTTLRKVLKLNLTPYLESFEVISAGASKEFSLERAMNAMIATWDDISFHISLYRDTGVYILSSVDEIQAILDDQIIKTQTMRGSPFIKPFENEIKAWEDRLIRIQETIDEWLKVQAQWLYLEPIFCSEDIMQQMPEEGRQFQTVDRHWKDIMKFCAKDPKVLAATSLTGLLEKLQNCNDLLDKIMKGLNAYLEKKRLFFPRFFFLSNDEMLEILSETKDPLRVQPHLKKCFEGIAKLEFLTNLDIKAMYSSEGERVELISVISTSAARGAVEKWLIQVEDLMLRSIHDVIAASRLAYPESARKDWVREWPGQVVLCVSQMFWTSETQEVISGGNEGLKKYYKELQYQLNDIVELVRGKLSKQTRITLGALVTIDVHARDVVMDMIDMGVSHDTDFQWLAQLRYYWEYENARVRIVNCNVKYAYEYLGNSPRLVITPLTDRCYRTLIGAFYLNLGGAPEGPAGTGKTETTKDLAKALAVQCVVFNCSDGLDYLAMGKFFKGLASSGAWACFDEFNRIELEVLSVVAQQILCIQRAIQQKLEVFVFEGTELRLNPNCFVAITMNPGYAGRSELPDNLKVLFRTVAMMVPNYALIAEISLYSYGFLNAKPLSVKIVMTYRLCSEQLSSQFHYDYGMRAVKAVLVAAGNLKLKYPNENEDILLLRSIKDVNEPKFLSHDIPLFNGITSDLFPGIKLPEADYQEFLECAYEACETQNLQPVKFFLEKIIQTYEMMIVRHGFMLVGEPFAAKTEVLHILADTLTLMNERNYGDEEKVMYRTVNPKSITMGQLFGQFDPVSHEWTDGIVANTFREFALAESPDRKWVVFDGPIDTLWIESMNTVLDDNKKLCLMSGEIIQMSPQMSLIFETMDLSQASPATVSRCGMIYLEPSQLGWEPIVASWLNSLKEPLNELEHQNLLKELFNWLVQPSLEFRRKKCKVTAHRVWLFPTVYSSWVCLILFVLEVSAVSPKCSLKSNCYNLFHQQATFVFSLIWSVGASCDTDGRLAFDNFLRSLVTGKNDKAPMPVFINKWECPFDEKGLVYDYMYELRNRGRWIHWNDLIKSSDIEDRRTKIQDIIVPTMDTIRYTFLMDLCISHAKPLLFVGPTGTGKSVYVKDKLMNHLEKGKYFPFYVNFSARTSANQVQNIIMARLDKRRKGVFGPPMGKKCVVFIDDMNMPSLEKYGAQPPIELLRQFFDCGHWYDLKDTTKITLVDIELIAAMGPPGGGRNAVTPRFIRHFNICTINSFSDETMVRIFSSIMMFYLRTHDFSPEYFVLGHQIVSATMEIYKQSMGNLLPTPAKSHYTFNLRDFSRVIRGCLLIDKEAIESKHTMIRLFVHEVLRVFYDRLINDEDRNWLFLLIKNVIKDHFKESLENVFSHLRRGNSSINEEDLRNLMFGDYMNPDLEGDDRVYIEILNIHQFNEVVDQCLDEYNQTHKRRMNLVVFRYVLEHLSRICRILKQSGGNALLIGLGGSGRQSLTSLATSMAKMQIFQPEISKSYGMNEWREDIKPNLMSVFYATSIRDNLSKILEKRLRYLNDHFTYNLYCNICRSLFEKDKLLFSFLLCANLLLAKKEIEYQELMFLLTGGVSLKSAEKNPDPNWLQDKSWEEICRASELPVFHGLREHFCNHIREWEDIYNSKEPHNMKLPESMDKTLNELQKIIILRCLRPDKITPAITNYVTDKLGKKFVEPPPFDLTKSYLDSNCTIPLIFVLSPGADPMASLLKFANDKSMSGNKFQAISLGQGQGPVATKMITAAIEEGTWVCLQNCHLAVSWMPTLEKICEDFSPEICNPTFRLWLTSYPSPKFPVTILQNGVKMTNEPPTGLRLNLLQSYLSDPISDPEFFNGCPGKELAWEKLLFGVCFFHALVQERKKFGPLGWNIPYGFNESDLRISIRQLQLFINEYDTIPFEAISYLTGECNYGGRVTDDWDRRLLLTMLADFYNSLIIENPHYKFSPSGNYFAPPKGTYDEYIEFIKKLPFTQEPEIFGLHENVDISKDLQQTKLLFESLLLTQGGVKQTGSSGSTDQILLEITEDILTQLPNDFDIEAALRSYPVRYEESMNTVLVQEMERFNNLIITIRNTLRDLKKAIKGVVVMDSALEALSGSLLIGKVPEMWAQRSYPSLKPLGSYITDFLTRLKFLEDWFTMGKPNVFWISGFFFTQAFLTGAMQNYARKYTIPIDLLGYEFEVIPSDNATNPPEDGVYIHGLYLDGARWNRTSGLLAEQHPKLLFDLMPIIWIKPNVKTEIVKTDAYVCPLYKTSERKGTLSTTGHSTNFVIAMLLRTELPAQHWIKRGVALLCQLD</sequence>
<reference key="1">
    <citation type="journal article" date="2004" name="Nature">
        <title>Genome sequence of the Brown Norway rat yields insights into mammalian evolution.</title>
        <authorList>
            <person name="Gibbs R.A."/>
            <person name="Weinstock G.M."/>
            <person name="Metzker M.L."/>
            <person name="Muzny D.M."/>
            <person name="Sodergren E.J."/>
            <person name="Scherer S."/>
            <person name="Scott G."/>
            <person name="Steffen D."/>
            <person name="Worley K.C."/>
            <person name="Burch P.E."/>
            <person name="Okwuonu G."/>
            <person name="Hines S."/>
            <person name="Lewis L."/>
            <person name="Deramo C."/>
            <person name="Delgado O."/>
            <person name="Dugan-Rocha S."/>
            <person name="Miner G."/>
            <person name="Morgan M."/>
            <person name="Hawes A."/>
            <person name="Gill R."/>
            <person name="Holt R.A."/>
            <person name="Adams M.D."/>
            <person name="Amanatides P.G."/>
            <person name="Baden-Tillson H."/>
            <person name="Barnstead M."/>
            <person name="Chin S."/>
            <person name="Evans C.A."/>
            <person name="Ferriera S."/>
            <person name="Fosler C."/>
            <person name="Glodek A."/>
            <person name="Gu Z."/>
            <person name="Jennings D."/>
            <person name="Kraft C.L."/>
            <person name="Nguyen T."/>
            <person name="Pfannkoch C.M."/>
            <person name="Sitter C."/>
            <person name="Sutton G.G."/>
            <person name="Venter J.C."/>
            <person name="Woodage T."/>
            <person name="Smith D."/>
            <person name="Lee H.-M."/>
            <person name="Gustafson E."/>
            <person name="Cahill P."/>
            <person name="Kana A."/>
            <person name="Doucette-Stamm L."/>
            <person name="Weinstock K."/>
            <person name="Fechtel K."/>
            <person name="Weiss R.B."/>
            <person name="Dunn D.M."/>
            <person name="Green E.D."/>
            <person name="Blakesley R.W."/>
            <person name="Bouffard G.G."/>
            <person name="De Jong P.J."/>
            <person name="Osoegawa K."/>
            <person name="Zhu B."/>
            <person name="Marra M."/>
            <person name="Schein J."/>
            <person name="Bosdet I."/>
            <person name="Fjell C."/>
            <person name="Jones S."/>
            <person name="Krzywinski M."/>
            <person name="Mathewson C."/>
            <person name="Siddiqui A."/>
            <person name="Wye N."/>
            <person name="McPherson J."/>
            <person name="Zhao S."/>
            <person name="Fraser C.M."/>
            <person name="Shetty J."/>
            <person name="Shatsman S."/>
            <person name="Geer K."/>
            <person name="Chen Y."/>
            <person name="Abramzon S."/>
            <person name="Nierman W.C."/>
            <person name="Havlak P.H."/>
            <person name="Chen R."/>
            <person name="Durbin K.J."/>
            <person name="Egan A."/>
            <person name="Ren Y."/>
            <person name="Song X.-Z."/>
            <person name="Li B."/>
            <person name="Liu Y."/>
            <person name="Qin X."/>
            <person name="Cawley S."/>
            <person name="Cooney A.J."/>
            <person name="D'Souza L.M."/>
            <person name="Martin K."/>
            <person name="Wu J.Q."/>
            <person name="Gonzalez-Garay M.L."/>
            <person name="Jackson A.R."/>
            <person name="Kalafus K.J."/>
            <person name="McLeod M.P."/>
            <person name="Milosavljevic A."/>
            <person name="Virk D."/>
            <person name="Volkov A."/>
            <person name="Wheeler D.A."/>
            <person name="Zhang Z."/>
            <person name="Bailey J.A."/>
            <person name="Eichler E.E."/>
            <person name="Tuzun E."/>
            <person name="Birney E."/>
            <person name="Mongin E."/>
            <person name="Ureta-Vidal A."/>
            <person name="Woodwark C."/>
            <person name="Zdobnov E."/>
            <person name="Bork P."/>
            <person name="Suyama M."/>
            <person name="Torrents D."/>
            <person name="Alexandersson M."/>
            <person name="Trask B.J."/>
            <person name="Young J.M."/>
            <person name="Huang H."/>
            <person name="Wang H."/>
            <person name="Xing H."/>
            <person name="Daniels S."/>
            <person name="Gietzen D."/>
            <person name="Schmidt J."/>
            <person name="Stevens K."/>
            <person name="Vitt U."/>
            <person name="Wingrove J."/>
            <person name="Camara F."/>
            <person name="Mar Alba M."/>
            <person name="Abril J.F."/>
            <person name="Guigo R."/>
            <person name="Smit A."/>
            <person name="Dubchak I."/>
            <person name="Rubin E.M."/>
            <person name="Couronne O."/>
            <person name="Poliakov A."/>
            <person name="Huebner N."/>
            <person name="Ganten D."/>
            <person name="Goesele C."/>
            <person name="Hummel O."/>
            <person name="Kreitler T."/>
            <person name="Lee Y.-A."/>
            <person name="Monti J."/>
            <person name="Schulz H."/>
            <person name="Zimdahl H."/>
            <person name="Himmelbauer H."/>
            <person name="Lehrach H."/>
            <person name="Jacob H.J."/>
            <person name="Bromberg S."/>
            <person name="Gullings-Handley J."/>
            <person name="Jensen-Seaman M.I."/>
            <person name="Kwitek A.E."/>
            <person name="Lazar J."/>
            <person name="Pasko D."/>
            <person name="Tonellato P.J."/>
            <person name="Twigger S."/>
            <person name="Ponting C.P."/>
            <person name="Duarte J.M."/>
            <person name="Rice S."/>
            <person name="Goodstadt L."/>
            <person name="Beatson S.A."/>
            <person name="Emes R.D."/>
            <person name="Winter E.E."/>
            <person name="Webber C."/>
            <person name="Brandt P."/>
            <person name="Nyakatura G."/>
            <person name="Adetobi M."/>
            <person name="Chiaromonte F."/>
            <person name="Elnitski L."/>
            <person name="Eswara P."/>
            <person name="Hardison R.C."/>
            <person name="Hou M."/>
            <person name="Kolbe D."/>
            <person name="Makova K."/>
            <person name="Miller W."/>
            <person name="Nekrutenko A."/>
            <person name="Riemer C."/>
            <person name="Schwartz S."/>
            <person name="Taylor J."/>
            <person name="Yang S."/>
            <person name="Zhang Y."/>
            <person name="Lindpaintner K."/>
            <person name="Andrews T.D."/>
            <person name="Caccamo M."/>
            <person name="Clamp M."/>
            <person name="Clarke L."/>
            <person name="Curwen V."/>
            <person name="Durbin R.M."/>
            <person name="Eyras E."/>
            <person name="Searle S.M."/>
            <person name="Cooper G.M."/>
            <person name="Batzoglou S."/>
            <person name="Brudno M."/>
            <person name="Sidow A."/>
            <person name="Stone E.A."/>
            <person name="Payseur B.A."/>
            <person name="Bourque G."/>
            <person name="Lopez-Otin C."/>
            <person name="Puente X.S."/>
            <person name="Chakrabarti K."/>
            <person name="Chatterji S."/>
            <person name="Dewey C."/>
            <person name="Pachter L."/>
            <person name="Bray N."/>
            <person name="Yap V.B."/>
            <person name="Caspi A."/>
            <person name="Tesler G."/>
            <person name="Pevzner P.A."/>
            <person name="Haussler D."/>
            <person name="Roskin K.M."/>
            <person name="Baertsch R."/>
            <person name="Clawson H."/>
            <person name="Furey T.S."/>
            <person name="Hinrichs A.S."/>
            <person name="Karolchik D."/>
            <person name="Kent W.J."/>
            <person name="Rosenbloom K.R."/>
            <person name="Trumbower H."/>
            <person name="Weirauch M."/>
            <person name="Cooper D.N."/>
            <person name="Stenson P.D."/>
            <person name="Ma B."/>
            <person name="Brent M."/>
            <person name="Arumugam M."/>
            <person name="Shteynberg D."/>
            <person name="Copley R.R."/>
            <person name="Taylor M.S."/>
            <person name="Riethman H."/>
            <person name="Mudunuri U."/>
            <person name="Peterson J."/>
            <person name="Guyer M."/>
            <person name="Felsenfeld A."/>
            <person name="Old S."/>
            <person name="Mockrin S."/>
            <person name="Collins F.S."/>
        </authorList>
    </citation>
    <scope>NUCLEOTIDE SEQUENCE [LARGE SCALE GENOMIC DNA]</scope>
    <source>
        <strain>Brown Norway</strain>
    </source>
</reference>
<reference key="2">
    <citation type="journal article" date="2001" name="Brain Res.">
        <title>Altered gene expression in cerebral capillaries of stroke-prone spontaneously hypertensive rats.</title>
        <authorList>
            <person name="Kirsch T."/>
            <person name="Wellner M."/>
            <person name="Luft F.C."/>
            <person name="Haller H."/>
            <person name="Lippoldt A."/>
        </authorList>
    </citation>
    <scope>NUCLEOTIDE SEQUENCE [MRNA] OF 600-736</scope>
    <source>
        <strain>SHRSP</strain>
    </source>
</reference>
<protein>
    <recommendedName>
        <fullName>Dynein axonemal heavy chain 12</fullName>
    </recommendedName>
    <alternativeName>
        <fullName>Bm259</fullName>
    </alternativeName>
</protein>
<dbReference type="EMBL" id="AABR03100937">
    <property type="status" value="NOT_ANNOTATED_CDS"/>
    <property type="molecule type" value="Genomic_DNA"/>
</dbReference>
<dbReference type="EMBL" id="AABR03102926">
    <property type="status" value="NOT_ANNOTATED_CDS"/>
    <property type="molecule type" value="Genomic_DNA"/>
</dbReference>
<dbReference type="EMBL" id="AABR03102110">
    <property type="status" value="NOT_ANNOTATED_CDS"/>
    <property type="molecule type" value="Genomic_DNA"/>
</dbReference>
<dbReference type="EMBL" id="AABR03100400">
    <property type="status" value="NOT_ANNOTATED_CDS"/>
    <property type="molecule type" value="Genomic_DNA"/>
</dbReference>
<dbReference type="EMBL" id="AABR03102032">
    <property type="status" value="NOT_ANNOTATED_CDS"/>
    <property type="molecule type" value="Genomic_DNA"/>
</dbReference>
<dbReference type="EMBL" id="AABR03101661">
    <property type="status" value="NOT_ANNOTATED_CDS"/>
    <property type="molecule type" value="Genomic_DNA"/>
</dbReference>
<dbReference type="EMBL" id="AABR03100963">
    <property type="status" value="NOT_ANNOTATED_CDS"/>
    <property type="molecule type" value="Genomic_DNA"/>
</dbReference>
<dbReference type="EMBL" id="AY032856">
    <property type="protein sequence ID" value="AAK64519.1"/>
    <property type="molecule type" value="mRNA"/>
</dbReference>
<dbReference type="SMR" id="Q923J6"/>
<dbReference type="FunCoup" id="Q923J6">
    <property type="interactions" value="31"/>
</dbReference>
<dbReference type="STRING" id="10116.ENSRNOP00000074159"/>
<dbReference type="GlyGen" id="Q923J6">
    <property type="glycosylation" value="3 sites"/>
</dbReference>
<dbReference type="PhosphoSitePlus" id="Q923J6"/>
<dbReference type="UCSC" id="RGD:619990">
    <property type="organism name" value="rat"/>
</dbReference>
<dbReference type="AGR" id="RGD:619990"/>
<dbReference type="RGD" id="619990">
    <property type="gene designation" value="Dnah12"/>
</dbReference>
<dbReference type="InParanoid" id="Q923J6"/>
<dbReference type="PhylomeDB" id="Q923J6"/>
<dbReference type="PRO" id="PR:Q923J6"/>
<dbReference type="Proteomes" id="UP000002494">
    <property type="component" value="Unplaced"/>
</dbReference>
<dbReference type="GO" id="GO:0097729">
    <property type="term" value="C:9+2 motile cilium"/>
    <property type="evidence" value="ECO:0000318"/>
    <property type="project" value="GO_Central"/>
</dbReference>
<dbReference type="GO" id="GO:0036156">
    <property type="term" value="C:inner dynein arm"/>
    <property type="evidence" value="ECO:0000318"/>
    <property type="project" value="GO_Central"/>
</dbReference>
<dbReference type="GO" id="GO:0005874">
    <property type="term" value="C:microtubule"/>
    <property type="evidence" value="ECO:0007669"/>
    <property type="project" value="UniProtKB-KW"/>
</dbReference>
<dbReference type="GO" id="GO:0005524">
    <property type="term" value="F:ATP binding"/>
    <property type="evidence" value="ECO:0007669"/>
    <property type="project" value="UniProtKB-KW"/>
</dbReference>
<dbReference type="GO" id="GO:0016887">
    <property type="term" value="F:ATP hydrolysis activity"/>
    <property type="evidence" value="ECO:0007669"/>
    <property type="project" value="InterPro"/>
</dbReference>
<dbReference type="GO" id="GO:0045505">
    <property type="term" value="F:dynein intermediate chain binding"/>
    <property type="evidence" value="ECO:0000318"/>
    <property type="project" value="GO_Central"/>
</dbReference>
<dbReference type="GO" id="GO:0051959">
    <property type="term" value="F:dynein light intermediate chain binding"/>
    <property type="evidence" value="ECO:0000318"/>
    <property type="project" value="GO_Central"/>
</dbReference>
<dbReference type="GO" id="GO:0008569">
    <property type="term" value="F:minus-end-directed microtubule motor activity"/>
    <property type="evidence" value="ECO:0000318"/>
    <property type="project" value="GO_Central"/>
</dbReference>
<dbReference type="GO" id="GO:0060294">
    <property type="term" value="P:cilium movement involved in cell motility"/>
    <property type="evidence" value="ECO:0000318"/>
    <property type="project" value="GO_Central"/>
</dbReference>
<dbReference type="CDD" id="cd00009">
    <property type="entry name" value="AAA"/>
    <property type="match status" value="1"/>
</dbReference>
<dbReference type="FunFam" id="1.20.920.30:FF:000002">
    <property type="entry name" value="Dynein axonemal heavy chain 3"/>
    <property type="match status" value="1"/>
</dbReference>
<dbReference type="FunFam" id="1.10.8.710:FF:000004">
    <property type="entry name" value="Dynein axonemal heavy chain 6"/>
    <property type="match status" value="1"/>
</dbReference>
<dbReference type="FunFam" id="1.20.140.100:FF:000004">
    <property type="entry name" value="Dynein axonemal heavy chain 6"/>
    <property type="match status" value="1"/>
</dbReference>
<dbReference type="FunFam" id="3.20.180.20:FF:000003">
    <property type="entry name" value="Dynein heavy chain 12, axonemal"/>
    <property type="match status" value="1"/>
</dbReference>
<dbReference type="FunFam" id="3.40.50.300:FF:001112">
    <property type="entry name" value="Dynein heavy chain 12, axonemal"/>
    <property type="match status" value="1"/>
</dbReference>
<dbReference type="FunFam" id="1.10.287.2620:FF:000002">
    <property type="entry name" value="Dynein heavy chain 2, axonemal"/>
    <property type="match status" value="1"/>
</dbReference>
<dbReference type="FunFam" id="3.40.50.300:FF:000044">
    <property type="entry name" value="Dynein heavy chain 5, axonemal"/>
    <property type="match status" value="1"/>
</dbReference>
<dbReference type="FunFam" id="1.10.8.720:FF:000001">
    <property type="entry name" value="dynein heavy chain 7, axonemal"/>
    <property type="match status" value="1"/>
</dbReference>
<dbReference type="FunFam" id="1.20.1270.280:FF:000001">
    <property type="entry name" value="dynein heavy chain 7, axonemal"/>
    <property type="match status" value="1"/>
</dbReference>
<dbReference type="FunFam" id="3.10.490.20:FF:000001">
    <property type="entry name" value="dynein heavy chain 7, axonemal"/>
    <property type="match status" value="1"/>
</dbReference>
<dbReference type="FunFam" id="1.20.58.1120:FF:000005">
    <property type="entry name" value="Dynein, axonemal, heavy chain 12"/>
    <property type="match status" value="1"/>
</dbReference>
<dbReference type="FunFam" id="3.40.50.300:FF:000362">
    <property type="entry name" value="Dynein, axonemal, heavy chain 6"/>
    <property type="match status" value="1"/>
</dbReference>
<dbReference type="FunFam" id="3.40.50.300:FF:005585">
    <property type="entry name" value="Predicted protein"/>
    <property type="match status" value="1"/>
</dbReference>
<dbReference type="Gene3D" id="1.10.287.2620">
    <property type="match status" value="1"/>
</dbReference>
<dbReference type="Gene3D" id="1.10.8.710">
    <property type="match status" value="1"/>
</dbReference>
<dbReference type="Gene3D" id="1.20.1270.280">
    <property type="match status" value="1"/>
</dbReference>
<dbReference type="Gene3D" id="1.20.58.1120">
    <property type="match status" value="1"/>
</dbReference>
<dbReference type="Gene3D" id="1.20.920.30">
    <property type="match status" value="1"/>
</dbReference>
<dbReference type="Gene3D" id="3.10.490.20">
    <property type="match status" value="1"/>
</dbReference>
<dbReference type="Gene3D" id="1.20.140.100">
    <property type="entry name" value="Dynein heavy chain, N-terminal domain 2"/>
    <property type="match status" value="1"/>
</dbReference>
<dbReference type="Gene3D" id="3.20.180.20">
    <property type="entry name" value="Dynein heavy chain, N-terminal domain 2"/>
    <property type="match status" value="1"/>
</dbReference>
<dbReference type="Gene3D" id="3.40.50.300">
    <property type="entry name" value="P-loop containing nucleotide triphosphate hydrolases"/>
    <property type="match status" value="5"/>
</dbReference>
<dbReference type="Gene3D" id="1.10.8.720">
    <property type="entry name" value="Region D6 of dynein motor"/>
    <property type="match status" value="1"/>
</dbReference>
<dbReference type="InterPro" id="IPR003593">
    <property type="entry name" value="AAA+_ATPase"/>
</dbReference>
<dbReference type="InterPro" id="IPR035699">
    <property type="entry name" value="AAA_6"/>
</dbReference>
<dbReference type="InterPro" id="IPR041658">
    <property type="entry name" value="AAA_lid_11"/>
</dbReference>
<dbReference type="InterPro" id="IPR042219">
    <property type="entry name" value="AAA_lid_11_sf"/>
</dbReference>
<dbReference type="InterPro" id="IPR026983">
    <property type="entry name" value="DHC"/>
</dbReference>
<dbReference type="InterPro" id="IPR041589">
    <property type="entry name" value="DNAH3_AAA_lid_1"/>
</dbReference>
<dbReference type="InterPro" id="IPR042222">
    <property type="entry name" value="Dynein_2_N"/>
</dbReference>
<dbReference type="InterPro" id="IPR043157">
    <property type="entry name" value="Dynein_AAA1S"/>
</dbReference>
<dbReference type="InterPro" id="IPR041466">
    <property type="entry name" value="Dynein_AAA5_ext"/>
</dbReference>
<dbReference type="InterPro" id="IPR041228">
    <property type="entry name" value="Dynein_C"/>
</dbReference>
<dbReference type="InterPro" id="IPR043160">
    <property type="entry name" value="Dynein_C_barrel"/>
</dbReference>
<dbReference type="InterPro" id="IPR024317">
    <property type="entry name" value="Dynein_heavy_chain_D4_dom"/>
</dbReference>
<dbReference type="InterPro" id="IPR004273">
    <property type="entry name" value="Dynein_heavy_D6_P-loop"/>
</dbReference>
<dbReference type="InterPro" id="IPR013602">
    <property type="entry name" value="Dynein_heavy_linker"/>
</dbReference>
<dbReference type="InterPro" id="IPR042228">
    <property type="entry name" value="Dynein_linker_3"/>
</dbReference>
<dbReference type="InterPro" id="IPR027417">
    <property type="entry name" value="P-loop_NTPase"/>
</dbReference>
<dbReference type="PANTHER" id="PTHR22878:SF70">
    <property type="entry name" value="DYNEIN HEAVY CHAIN 2, AXONEMAL"/>
    <property type="match status" value="1"/>
</dbReference>
<dbReference type="PANTHER" id="PTHR22878">
    <property type="entry name" value="DYNEIN HEAVY CHAIN 6, AXONEMAL-LIKE-RELATED"/>
    <property type="match status" value="1"/>
</dbReference>
<dbReference type="Pfam" id="PF12774">
    <property type="entry name" value="AAA_6"/>
    <property type="match status" value="1"/>
</dbReference>
<dbReference type="Pfam" id="PF12775">
    <property type="entry name" value="AAA_7"/>
    <property type="match status" value="1"/>
</dbReference>
<dbReference type="Pfam" id="PF12780">
    <property type="entry name" value="AAA_8"/>
    <property type="match status" value="1"/>
</dbReference>
<dbReference type="Pfam" id="PF17857">
    <property type="entry name" value="AAA_lid_1"/>
    <property type="match status" value="1"/>
</dbReference>
<dbReference type="Pfam" id="PF18198">
    <property type="entry name" value="AAA_lid_11"/>
    <property type="match status" value="1"/>
</dbReference>
<dbReference type="Pfam" id="PF08393">
    <property type="entry name" value="DHC_N2"/>
    <property type="match status" value="1"/>
</dbReference>
<dbReference type="Pfam" id="PF17852">
    <property type="entry name" value="Dynein_AAA_lid"/>
    <property type="match status" value="1"/>
</dbReference>
<dbReference type="Pfam" id="PF18199">
    <property type="entry name" value="Dynein_C"/>
    <property type="match status" value="1"/>
</dbReference>
<dbReference type="Pfam" id="PF03028">
    <property type="entry name" value="Dynein_heavy"/>
    <property type="match status" value="1"/>
</dbReference>
<dbReference type="SMART" id="SM00382">
    <property type="entry name" value="AAA"/>
    <property type="match status" value="2"/>
</dbReference>
<dbReference type="SUPFAM" id="SSF52540">
    <property type="entry name" value="P-loop containing nucleoside triphosphate hydrolases"/>
    <property type="match status" value="3"/>
</dbReference>
<accession>Q923J6</accession>
<gene>
    <name type="primary">Dnah12</name>
</gene>
<keyword id="KW-0067">ATP-binding</keyword>
<keyword id="KW-0966">Cell projection</keyword>
<keyword id="KW-0969">Cilium</keyword>
<keyword id="KW-0175">Coiled coil</keyword>
<keyword id="KW-0963">Cytoplasm</keyword>
<keyword id="KW-0206">Cytoskeleton</keyword>
<keyword id="KW-0243">Dynein</keyword>
<keyword id="KW-0493">Microtubule</keyword>
<keyword id="KW-0505">Motor protein</keyword>
<keyword id="KW-0547">Nucleotide-binding</keyword>
<keyword id="KW-1185">Reference proteome</keyword>
<keyword id="KW-0677">Repeat</keyword>
<keyword id="KW-0833">Ubl conjugation pathway</keyword>
<organism>
    <name type="scientific">Rattus norvegicus</name>
    <name type="common">Rat</name>
    <dbReference type="NCBI Taxonomy" id="10116"/>
    <lineage>
        <taxon>Eukaryota</taxon>
        <taxon>Metazoa</taxon>
        <taxon>Chordata</taxon>
        <taxon>Craniata</taxon>
        <taxon>Vertebrata</taxon>
        <taxon>Euteleostomi</taxon>
        <taxon>Mammalia</taxon>
        <taxon>Eutheria</taxon>
        <taxon>Euarchontoglires</taxon>
        <taxon>Glires</taxon>
        <taxon>Rodentia</taxon>
        <taxon>Myomorpha</taxon>
        <taxon>Muroidea</taxon>
        <taxon>Muridae</taxon>
        <taxon>Murinae</taxon>
        <taxon>Rattus</taxon>
    </lineage>
</organism>
<evidence type="ECO:0000250" key="1"/>
<evidence type="ECO:0000255" key="2"/>
<evidence type="ECO:0000256" key="3">
    <source>
        <dbReference type="SAM" id="MobiDB-lite"/>
    </source>
</evidence>
<evidence type="ECO:0000305" key="4"/>
<comment type="function">
    <text evidence="1">Force generating protein of respiratory cilia. Produces force towards the minus ends of microtubules. Dynein has ATPase activity; the force-producing power stroke is thought to occur on release of ADP. Involved in sperm motility; implicated in sperm flagellar assembly (By similarity).</text>
</comment>
<comment type="subunit">
    <text>Consists of at least two heavy chains and a number of intermediate and light chains.</text>
</comment>
<comment type="subcellular location">
    <subcellularLocation>
        <location evidence="4">Cytoplasm</location>
        <location evidence="4">Cytoskeleton</location>
        <location evidence="4">Cilium axoneme</location>
    </subcellularLocation>
</comment>
<comment type="domain">
    <text evidence="1">Dynein heavy chains probably consist of an N-terminal stem (which binds cargo and interacts with other dynein components), and the head or motor domain. The motor contains six tandemly-linked AAA domains in the head, which form a ring. A stalk-like structure (formed by two of the coiled coil domains) protrudes between AAA 4 and AAA 5 and terminates in a microtubule-binding site. A seventh domain may also contribute to this ring; it is not clear whether the N-terminus or the C-terminus forms this extra domain. There are four well-conserved and two non-conserved ATPase sites, one per AAA domain. Probably only one of these (within AAA 1) actually hydrolyzes ATP, the others may serve a regulatory function (By similarity).</text>
</comment>
<comment type="similarity">
    <text evidence="4">Belongs to the dynein heavy chain family.</text>
</comment>
<name>DYH12_RAT</name>
<feature type="chain" id="PRO_0000370365" description="Dynein axonemal heavy chain 12">
    <location>
        <begin position="1"/>
        <end position="3092"/>
    </location>
</feature>
<feature type="region of interest" description="Stem" evidence="1">
    <location>
        <begin position="1"/>
        <end position="1212"/>
    </location>
</feature>
<feature type="region of interest" description="Disordered" evidence="3">
    <location>
        <begin position="745"/>
        <end position="767"/>
    </location>
</feature>
<feature type="region of interest" description="AAA 1" evidence="1">
    <location>
        <begin position="1213"/>
        <end position="1434"/>
    </location>
</feature>
<feature type="region of interest" description="AAA 2" evidence="1">
    <location>
        <begin position="1494"/>
        <end position="1634"/>
    </location>
</feature>
<feature type="region of interest" description="AAA 3" evidence="1">
    <location>
        <begin position="1853"/>
        <end position="2104"/>
    </location>
</feature>
<feature type="region of interest" description="AAA 4" evidence="1">
    <location>
        <begin position="2218"/>
        <end position="2661"/>
    </location>
</feature>
<feature type="region of interest" description="Stalk" evidence="1">
    <location>
        <begin position="2662"/>
        <end position="2796"/>
    </location>
</feature>
<feature type="region of interest" description="AAA 5" evidence="1">
    <location>
        <begin position="2875"/>
        <end position="3052"/>
    </location>
</feature>
<feature type="coiled-coil region" evidence="2">
    <location>
        <begin position="592"/>
        <end position="665"/>
    </location>
</feature>
<feature type="short sequence motif" description="GPAGTGKT motif">
    <location>
        <begin position="1251"/>
        <end position="1258"/>
    </location>
</feature>
<feature type="short sequence motif" description="CFDEFNR motif">
    <location>
        <begin position="1301"/>
        <end position="1307"/>
    </location>
</feature>
<feature type="binding site" evidence="2">
    <location>
        <begin position="1251"/>
        <end position="1258"/>
    </location>
    <ligand>
        <name>ATP</name>
        <dbReference type="ChEBI" id="CHEBI:30616"/>
    </ligand>
</feature>
<feature type="binding site" evidence="2">
    <location>
        <begin position="1532"/>
        <end position="1539"/>
    </location>
    <ligand>
        <name>ATP</name>
        <dbReference type="ChEBI" id="CHEBI:30616"/>
    </ligand>
</feature>
<feature type="binding site" evidence="2">
    <location>
        <begin position="1892"/>
        <end position="1899"/>
    </location>
    <ligand>
        <name>ATP</name>
        <dbReference type="ChEBI" id="CHEBI:30616"/>
    </ligand>
</feature>
<feature type="binding site" evidence="2">
    <location>
        <begin position="2257"/>
        <end position="2264"/>
    </location>
    <ligand>
        <name>ATP</name>
        <dbReference type="ChEBI" id="CHEBI:30616"/>
    </ligand>
</feature>